<protein>
    <recommendedName>
        <fullName evidence="1">tRNA dimethylallyltransferase</fullName>
        <ecNumber evidence="1">2.5.1.75</ecNumber>
    </recommendedName>
    <alternativeName>
        <fullName evidence="1">Dimethylallyl diphosphate:tRNA dimethylallyltransferase</fullName>
        <shortName evidence="1">DMAPP:tRNA dimethylallyltransferase</shortName>
        <shortName evidence="1">DMATase</shortName>
    </alternativeName>
    <alternativeName>
        <fullName evidence="1">Isopentenyl-diphosphate:tRNA isopentenyltransferase</fullName>
        <shortName evidence="1">IPP transferase</shortName>
        <shortName evidence="1">IPPT</shortName>
        <shortName evidence="1">IPTase</shortName>
    </alternativeName>
</protein>
<comment type="function">
    <text evidence="1">Catalyzes the transfer of a dimethylallyl group onto the adenine at position 37 in tRNAs that read codons beginning with uridine, leading to the formation of N6-(dimethylallyl)adenosine (i(6)A).</text>
</comment>
<comment type="catalytic activity">
    <reaction evidence="1">
        <text>adenosine(37) in tRNA + dimethylallyl diphosphate = N(6)-dimethylallyladenosine(37) in tRNA + diphosphate</text>
        <dbReference type="Rhea" id="RHEA:26482"/>
        <dbReference type="Rhea" id="RHEA-COMP:10162"/>
        <dbReference type="Rhea" id="RHEA-COMP:10375"/>
        <dbReference type="ChEBI" id="CHEBI:33019"/>
        <dbReference type="ChEBI" id="CHEBI:57623"/>
        <dbReference type="ChEBI" id="CHEBI:74411"/>
        <dbReference type="ChEBI" id="CHEBI:74415"/>
        <dbReference type="EC" id="2.5.1.75"/>
    </reaction>
</comment>
<comment type="cofactor">
    <cofactor evidence="1">
        <name>Mg(2+)</name>
        <dbReference type="ChEBI" id="CHEBI:18420"/>
    </cofactor>
</comment>
<comment type="subunit">
    <text evidence="1">Monomer.</text>
</comment>
<comment type="similarity">
    <text evidence="1">Belongs to the IPP transferase family.</text>
</comment>
<evidence type="ECO:0000255" key="1">
    <source>
        <dbReference type="HAMAP-Rule" id="MF_00185"/>
    </source>
</evidence>
<accession>Q0STR2</accession>
<proteinExistence type="inferred from homology"/>
<keyword id="KW-0067">ATP-binding</keyword>
<keyword id="KW-0460">Magnesium</keyword>
<keyword id="KW-0547">Nucleotide-binding</keyword>
<keyword id="KW-0808">Transferase</keyword>
<keyword id="KW-0819">tRNA processing</keyword>
<gene>
    <name evidence="1" type="primary">miaA</name>
    <name type="ordered locus">CPR_1173</name>
</gene>
<feature type="chain" id="PRO_1000020589" description="tRNA dimethylallyltransferase">
    <location>
        <begin position="1"/>
        <end position="310"/>
    </location>
</feature>
<feature type="region of interest" description="Interaction with substrate tRNA" evidence="1">
    <location>
        <begin position="35"/>
        <end position="38"/>
    </location>
</feature>
<feature type="binding site" evidence="1">
    <location>
        <begin position="10"/>
        <end position="17"/>
    </location>
    <ligand>
        <name>ATP</name>
        <dbReference type="ChEBI" id="CHEBI:30616"/>
    </ligand>
</feature>
<feature type="binding site" evidence="1">
    <location>
        <begin position="12"/>
        <end position="17"/>
    </location>
    <ligand>
        <name>substrate</name>
    </ligand>
</feature>
<feature type="site" description="Interaction with substrate tRNA" evidence="1">
    <location>
        <position position="101"/>
    </location>
</feature>
<feature type="site" description="Interaction with substrate tRNA" evidence="1">
    <location>
        <position position="124"/>
    </location>
</feature>
<dbReference type="EC" id="2.5.1.75" evidence="1"/>
<dbReference type="EMBL" id="CP000312">
    <property type="protein sequence ID" value="ABG87314.1"/>
    <property type="molecule type" value="Genomic_DNA"/>
</dbReference>
<dbReference type="RefSeq" id="WP_011592178.1">
    <property type="nucleotide sequence ID" value="NC_008262.1"/>
</dbReference>
<dbReference type="SMR" id="Q0STR2"/>
<dbReference type="KEGG" id="cpr:CPR_1173"/>
<dbReference type="Proteomes" id="UP000001824">
    <property type="component" value="Chromosome"/>
</dbReference>
<dbReference type="GO" id="GO:0005524">
    <property type="term" value="F:ATP binding"/>
    <property type="evidence" value="ECO:0007669"/>
    <property type="project" value="UniProtKB-UniRule"/>
</dbReference>
<dbReference type="GO" id="GO:0052381">
    <property type="term" value="F:tRNA dimethylallyltransferase activity"/>
    <property type="evidence" value="ECO:0007669"/>
    <property type="project" value="UniProtKB-UniRule"/>
</dbReference>
<dbReference type="GO" id="GO:0006400">
    <property type="term" value="P:tRNA modification"/>
    <property type="evidence" value="ECO:0007669"/>
    <property type="project" value="TreeGrafter"/>
</dbReference>
<dbReference type="FunFam" id="1.10.20.140:FF:000001">
    <property type="entry name" value="tRNA dimethylallyltransferase"/>
    <property type="match status" value="1"/>
</dbReference>
<dbReference type="Gene3D" id="1.10.20.140">
    <property type="match status" value="1"/>
</dbReference>
<dbReference type="Gene3D" id="3.40.50.300">
    <property type="entry name" value="P-loop containing nucleotide triphosphate hydrolases"/>
    <property type="match status" value="1"/>
</dbReference>
<dbReference type="HAMAP" id="MF_00185">
    <property type="entry name" value="IPP_trans"/>
    <property type="match status" value="1"/>
</dbReference>
<dbReference type="InterPro" id="IPR039657">
    <property type="entry name" value="Dimethylallyltransferase"/>
</dbReference>
<dbReference type="InterPro" id="IPR018022">
    <property type="entry name" value="IPT"/>
</dbReference>
<dbReference type="InterPro" id="IPR027417">
    <property type="entry name" value="P-loop_NTPase"/>
</dbReference>
<dbReference type="NCBIfam" id="TIGR00174">
    <property type="entry name" value="miaA"/>
    <property type="match status" value="1"/>
</dbReference>
<dbReference type="PANTHER" id="PTHR11088">
    <property type="entry name" value="TRNA DIMETHYLALLYLTRANSFERASE"/>
    <property type="match status" value="1"/>
</dbReference>
<dbReference type="PANTHER" id="PTHR11088:SF60">
    <property type="entry name" value="TRNA DIMETHYLALLYLTRANSFERASE"/>
    <property type="match status" value="1"/>
</dbReference>
<dbReference type="Pfam" id="PF01715">
    <property type="entry name" value="IPPT"/>
    <property type="match status" value="1"/>
</dbReference>
<dbReference type="SUPFAM" id="SSF52540">
    <property type="entry name" value="P-loop containing nucleoside triphosphate hydrolases"/>
    <property type="match status" value="2"/>
</dbReference>
<organism>
    <name type="scientific">Clostridium perfringens (strain SM101 / Type A)</name>
    <dbReference type="NCBI Taxonomy" id="289380"/>
    <lineage>
        <taxon>Bacteria</taxon>
        <taxon>Bacillati</taxon>
        <taxon>Bacillota</taxon>
        <taxon>Clostridia</taxon>
        <taxon>Eubacteriales</taxon>
        <taxon>Clostridiaceae</taxon>
        <taxon>Clostridium</taxon>
    </lineage>
</organism>
<reference key="1">
    <citation type="journal article" date="2006" name="Genome Res.">
        <title>Skewed genomic variability in strains of the toxigenic bacterial pathogen, Clostridium perfringens.</title>
        <authorList>
            <person name="Myers G.S.A."/>
            <person name="Rasko D.A."/>
            <person name="Cheung J.K."/>
            <person name="Ravel J."/>
            <person name="Seshadri R."/>
            <person name="DeBoy R.T."/>
            <person name="Ren Q."/>
            <person name="Varga J."/>
            <person name="Awad M.M."/>
            <person name="Brinkac L.M."/>
            <person name="Daugherty S.C."/>
            <person name="Haft D.H."/>
            <person name="Dodson R.J."/>
            <person name="Madupu R."/>
            <person name="Nelson W.C."/>
            <person name="Rosovitz M.J."/>
            <person name="Sullivan S.A."/>
            <person name="Khouri H."/>
            <person name="Dimitrov G.I."/>
            <person name="Watkins K.L."/>
            <person name="Mulligan S."/>
            <person name="Benton J."/>
            <person name="Radune D."/>
            <person name="Fisher D.J."/>
            <person name="Atkins H.S."/>
            <person name="Hiscox T."/>
            <person name="Jost B.H."/>
            <person name="Billington S.J."/>
            <person name="Songer J.G."/>
            <person name="McClane B.A."/>
            <person name="Titball R.W."/>
            <person name="Rood J.I."/>
            <person name="Melville S.B."/>
            <person name="Paulsen I.T."/>
        </authorList>
    </citation>
    <scope>NUCLEOTIDE SEQUENCE [LARGE SCALE GENOMIC DNA]</scope>
    <source>
        <strain>SM101 / Type A</strain>
    </source>
</reference>
<name>MIAA_CLOPS</name>
<sequence length="310" mass="35730">MNNNLLIIAGPTAVGKSDLSVDLAKKLNGEIISVDSMQIYKYMDIGSAKISKEEMGGIPHYLIDFVDPSKEFSVAEFKELATEKIKDIQSRGKLPILVGGTGLYINSIICNMNFAESDKDEEYREELEKIANEHGNEYLHEMLKDIDLESYNSIHFNNRKRVIRALETYKLTGKPFSSFKAKNSIYETPYNIYYYVLNMDRAKLYERINKRVDIMFEKGLLEEVKNLKAMGLTDDMQSMKGIGYKEVLYYLDGKISLEQCIEMIKQGSRNYAKRQLTWFRKDPRAIFIDKDTFSSEEDISSKIINDIINS</sequence>